<sequence>MSHDNKPTDSTPAASNFLRSIIDQDLAASTYAGRQDKAGEPLPTVITRFPPEPNGYLHIGHAKSICLNFGLARDYGGRCHLRFDDTNPVKEDTEYVDSIIDAVHWLGFSWDSEGKDGTRQPHLYYASDYFDQLYAFAETLIERGAAYIDSQTAEQIAASRGNFSEPGKPSPYRERSVEENLQLFRDMRAGKYADGEHVLRAKIDMTAPNIVMRDPVLYRIRHAHHHRTGDKWCIYPMYDFTHCISDALENITHSLCTLEFENNRPLYDWVLEHLRDSGVFRDPLPHQYEFARLNLTYAITSKRKLKQLVDEQRVDGWDDPRMPTLVGVRRRGYTPESIQLFCDRVGVAKADSWIDMSTLEGAVRDDLDGRAARGVAVLDPLKLIIDNYPEGQSEECSAPVHPKKPELGKRVFPLSRELWIEREDFNETPPKGYFRLFPGNKVRLKYGYVIECTGVDKDADGNVIAVHASYLPETKSGTPGADSVKVKGVIHWVSAAHAYEAEVRLYDRLFNDPNPDAGGKNFLDALNPDSKQVITAYLEPGLREAQPEDRFQFERHGYFVADRTDSQPGKPVFNRIVGLKDSWGK</sequence>
<protein>
    <recommendedName>
        <fullName evidence="1">Glutamine--tRNA ligase</fullName>
        <ecNumber evidence="1">6.1.1.18</ecNumber>
    </recommendedName>
    <alternativeName>
        <fullName evidence="1">Glutaminyl-tRNA synthetase</fullName>
        <shortName evidence="1">GlnRS</shortName>
    </alternativeName>
</protein>
<comment type="catalytic activity">
    <reaction evidence="1">
        <text>tRNA(Gln) + L-glutamine + ATP = L-glutaminyl-tRNA(Gln) + AMP + diphosphate</text>
        <dbReference type="Rhea" id="RHEA:20121"/>
        <dbReference type="Rhea" id="RHEA-COMP:9662"/>
        <dbReference type="Rhea" id="RHEA-COMP:9681"/>
        <dbReference type="ChEBI" id="CHEBI:30616"/>
        <dbReference type="ChEBI" id="CHEBI:33019"/>
        <dbReference type="ChEBI" id="CHEBI:58359"/>
        <dbReference type="ChEBI" id="CHEBI:78442"/>
        <dbReference type="ChEBI" id="CHEBI:78521"/>
        <dbReference type="ChEBI" id="CHEBI:456215"/>
        <dbReference type="EC" id="6.1.1.18"/>
    </reaction>
</comment>
<comment type="subunit">
    <text evidence="1">Monomer.</text>
</comment>
<comment type="subcellular location">
    <subcellularLocation>
        <location evidence="1">Cytoplasm</location>
    </subcellularLocation>
</comment>
<comment type="similarity">
    <text evidence="1">Belongs to the class-I aminoacyl-tRNA synthetase family.</text>
</comment>
<feature type="chain" id="PRO_1000095505" description="Glutamine--tRNA ligase">
    <location>
        <begin position="1"/>
        <end position="585"/>
    </location>
</feature>
<feature type="short sequence motif" description="'HIGH' region" evidence="1">
    <location>
        <begin position="51"/>
        <end position="61"/>
    </location>
</feature>
<feature type="short sequence motif" description="'KMSKS' region" evidence="1">
    <location>
        <begin position="299"/>
        <end position="303"/>
    </location>
</feature>
<feature type="binding site" evidence="1">
    <location>
        <begin position="52"/>
        <end position="54"/>
    </location>
    <ligand>
        <name>ATP</name>
        <dbReference type="ChEBI" id="CHEBI:30616"/>
    </ligand>
</feature>
<feature type="binding site" evidence="1">
    <location>
        <begin position="58"/>
        <end position="64"/>
    </location>
    <ligand>
        <name>ATP</name>
        <dbReference type="ChEBI" id="CHEBI:30616"/>
    </ligand>
</feature>
<feature type="binding site" evidence="1">
    <location>
        <position position="84"/>
    </location>
    <ligand>
        <name>L-glutamine</name>
        <dbReference type="ChEBI" id="CHEBI:58359"/>
    </ligand>
</feature>
<feature type="binding site" evidence="1">
    <location>
        <position position="238"/>
    </location>
    <ligand>
        <name>L-glutamine</name>
        <dbReference type="ChEBI" id="CHEBI:58359"/>
    </ligand>
</feature>
<feature type="binding site" evidence="1">
    <location>
        <position position="257"/>
    </location>
    <ligand>
        <name>ATP</name>
        <dbReference type="ChEBI" id="CHEBI:30616"/>
    </ligand>
</feature>
<feature type="binding site" evidence="1">
    <location>
        <begin position="292"/>
        <end position="293"/>
    </location>
    <ligand>
        <name>ATP</name>
        <dbReference type="ChEBI" id="CHEBI:30616"/>
    </ligand>
</feature>
<reference key="1">
    <citation type="journal article" date="2006" name="Nat. Biotechnol.">
        <title>Genome sequence of the bioplastic-producing 'Knallgas' bacterium Ralstonia eutropha H16.</title>
        <authorList>
            <person name="Pohlmann A."/>
            <person name="Fricke W.F."/>
            <person name="Reinecke F."/>
            <person name="Kusian B."/>
            <person name="Liesegang H."/>
            <person name="Cramm R."/>
            <person name="Eitinger T."/>
            <person name="Ewering C."/>
            <person name="Poetter M."/>
            <person name="Schwartz E."/>
            <person name="Strittmatter A."/>
            <person name="Voss I."/>
            <person name="Gottschalk G."/>
            <person name="Steinbuechel A."/>
            <person name="Friedrich B."/>
            <person name="Bowien B."/>
        </authorList>
    </citation>
    <scope>NUCLEOTIDE SEQUENCE [LARGE SCALE GENOMIC DNA]</scope>
    <source>
        <strain>ATCC 17699 / DSM 428 / KCTC 22496 / NCIMB 10442 / H16 / Stanier 337</strain>
    </source>
</reference>
<accession>Q0K808</accession>
<keyword id="KW-0030">Aminoacyl-tRNA synthetase</keyword>
<keyword id="KW-0067">ATP-binding</keyword>
<keyword id="KW-0963">Cytoplasm</keyword>
<keyword id="KW-0436">Ligase</keyword>
<keyword id="KW-0547">Nucleotide-binding</keyword>
<keyword id="KW-0648">Protein biosynthesis</keyword>
<keyword id="KW-1185">Reference proteome</keyword>
<gene>
    <name evidence="1" type="primary">glnS</name>
    <name type="ordered locus">H16_A2784</name>
</gene>
<organism>
    <name type="scientific">Cupriavidus necator (strain ATCC 17699 / DSM 428 / KCTC 22496 / NCIMB 10442 / H16 / Stanier 337)</name>
    <name type="common">Ralstonia eutropha</name>
    <dbReference type="NCBI Taxonomy" id="381666"/>
    <lineage>
        <taxon>Bacteria</taxon>
        <taxon>Pseudomonadati</taxon>
        <taxon>Pseudomonadota</taxon>
        <taxon>Betaproteobacteria</taxon>
        <taxon>Burkholderiales</taxon>
        <taxon>Burkholderiaceae</taxon>
        <taxon>Cupriavidus</taxon>
    </lineage>
</organism>
<dbReference type="EC" id="6.1.1.18" evidence="1"/>
<dbReference type="EMBL" id="AM260479">
    <property type="protein sequence ID" value="CAJ93863.1"/>
    <property type="molecule type" value="Genomic_DNA"/>
</dbReference>
<dbReference type="RefSeq" id="WP_011615831.1">
    <property type="nucleotide sequence ID" value="NC_008313.1"/>
</dbReference>
<dbReference type="SMR" id="Q0K808"/>
<dbReference type="STRING" id="381666.H16_A2784"/>
<dbReference type="KEGG" id="reh:H16_A2784"/>
<dbReference type="PATRIC" id="fig|381666.6.peg.3182"/>
<dbReference type="eggNOG" id="COG0008">
    <property type="taxonomic scope" value="Bacteria"/>
</dbReference>
<dbReference type="HOGENOM" id="CLU_001882_2_3_4"/>
<dbReference type="OrthoDB" id="9801560at2"/>
<dbReference type="Proteomes" id="UP000008210">
    <property type="component" value="Chromosome 1"/>
</dbReference>
<dbReference type="GO" id="GO:0005829">
    <property type="term" value="C:cytosol"/>
    <property type="evidence" value="ECO:0007669"/>
    <property type="project" value="TreeGrafter"/>
</dbReference>
<dbReference type="GO" id="GO:0005524">
    <property type="term" value="F:ATP binding"/>
    <property type="evidence" value="ECO:0007669"/>
    <property type="project" value="UniProtKB-UniRule"/>
</dbReference>
<dbReference type="GO" id="GO:0004819">
    <property type="term" value="F:glutamine-tRNA ligase activity"/>
    <property type="evidence" value="ECO:0007669"/>
    <property type="project" value="UniProtKB-UniRule"/>
</dbReference>
<dbReference type="GO" id="GO:0006425">
    <property type="term" value="P:glutaminyl-tRNA aminoacylation"/>
    <property type="evidence" value="ECO:0007669"/>
    <property type="project" value="InterPro"/>
</dbReference>
<dbReference type="GO" id="GO:0006424">
    <property type="term" value="P:glutamyl-tRNA aminoacylation"/>
    <property type="evidence" value="ECO:0007669"/>
    <property type="project" value="UniProtKB-UniRule"/>
</dbReference>
<dbReference type="CDD" id="cd00807">
    <property type="entry name" value="GlnRS_core"/>
    <property type="match status" value="1"/>
</dbReference>
<dbReference type="FunFam" id="1.10.1160.10:FF:000001">
    <property type="entry name" value="Glutamine--tRNA ligase"/>
    <property type="match status" value="1"/>
</dbReference>
<dbReference type="FunFam" id="3.90.800.10:FF:000001">
    <property type="entry name" value="Glutamine--tRNA ligase"/>
    <property type="match status" value="1"/>
</dbReference>
<dbReference type="FunFam" id="3.40.50.620:FF:000037">
    <property type="entry name" value="Glutamine--tRNA ligase cytoplasmic"/>
    <property type="match status" value="1"/>
</dbReference>
<dbReference type="Gene3D" id="3.40.50.620">
    <property type="entry name" value="HUPs"/>
    <property type="match status" value="1"/>
</dbReference>
<dbReference type="Gene3D" id="2.40.240.10">
    <property type="entry name" value="Ribosomal Protein L25, Chain P"/>
    <property type="match status" value="2"/>
</dbReference>
<dbReference type="HAMAP" id="MF_00126">
    <property type="entry name" value="Gln_tRNA_synth"/>
    <property type="match status" value="1"/>
</dbReference>
<dbReference type="InterPro" id="IPR001412">
    <property type="entry name" value="aa-tRNA-synth_I_CS"/>
</dbReference>
<dbReference type="InterPro" id="IPR004514">
    <property type="entry name" value="Gln-tRNA-synth"/>
</dbReference>
<dbReference type="InterPro" id="IPR050132">
    <property type="entry name" value="Gln/Glu-tRNA_Ligase"/>
</dbReference>
<dbReference type="InterPro" id="IPR022861">
    <property type="entry name" value="Gln_tRNA_ligase_bac"/>
</dbReference>
<dbReference type="InterPro" id="IPR000924">
    <property type="entry name" value="Glu/Gln-tRNA-synth"/>
</dbReference>
<dbReference type="InterPro" id="IPR020058">
    <property type="entry name" value="Glu/Gln-tRNA-synth_Ib_cat-dom"/>
</dbReference>
<dbReference type="InterPro" id="IPR020059">
    <property type="entry name" value="Glu/Gln-tRNA-synth_Ib_codon-bd"/>
</dbReference>
<dbReference type="InterPro" id="IPR020056">
    <property type="entry name" value="Rbsml_bL25/Gln-tRNA_synth_N"/>
</dbReference>
<dbReference type="InterPro" id="IPR011035">
    <property type="entry name" value="Ribosomal_bL25/Gln-tRNA_synth"/>
</dbReference>
<dbReference type="InterPro" id="IPR014729">
    <property type="entry name" value="Rossmann-like_a/b/a_fold"/>
</dbReference>
<dbReference type="InterPro" id="IPR049437">
    <property type="entry name" value="tRNA-synt_1c_C2"/>
</dbReference>
<dbReference type="NCBIfam" id="TIGR00440">
    <property type="entry name" value="glnS"/>
    <property type="match status" value="1"/>
</dbReference>
<dbReference type="NCBIfam" id="NF011291">
    <property type="entry name" value="PRK14703.1"/>
    <property type="match status" value="1"/>
</dbReference>
<dbReference type="PANTHER" id="PTHR43097:SF5">
    <property type="entry name" value="GLUTAMATE--TRNA LIGASE"/>
    <property type="match status" value="1"/>
</dbReference>
<dbReference type="PANTHER" id="PTHR43097">
    <property type="entry name" value="GLUTAMINE-TRNA LIGASE"/>
    <property type="match status" value="1"/>
</dbReference>
<dbReference type="Pfam" id="PF00749">
    <property type="entry name" value="tRNA-synt_1c"/>
    <property type="match status" value="1"/>
</dbReference>
<dbReference type="Pfam" id="PF03950">
    <property type="entry name" value="tRNA-synt_1c_C"/>
    <property type="match status" value="1"/>
</dbReference>
<dbReference type="Pfam" id="PF20974">
    <property type="entry name" value="tRNA-synt_1c_C2"/>
    <property type="match status" value="1"/>
</dbReference>
<dbReference type="PRINTS" id="PR00987">
    <property type="entry name" value="TRNASYNTHGLU"/>
</dbReference>
<dbReference type="SUPFAM" id="SSF52374">
    <property type="entry name" value="Nucleotidylyl transferase"/>
    <property type="match status" value="1"/>
</dbReference>
<dbReference type="SUPFAM" id="SSF50715">
    <property type="entry name" value="Ribosomal protein L25-like"/>
    <property type="match status" value="1"/>
</dbReference>
<dbReference type="PROSITE" id="PS00178">
    <property type="entry name" value="AA_TRNA_LIGASE_I"/>
    <property type="match status" value="1"/>
</dbReference>
<evidence type="ECO:0000255" key="1">
    <source>
        <dbReference type="HAMAP-Rule" id="MF_00126"/>
    </source>
</evidence>
<proteinExistence type="inferred from homology"/>
<name>SYQ_CUPNH</name>